<name>FOXP2_PANTR</name>
<proteinExistence type="evidence at transcript level"/>
<protein>
    <recommendedName>
        <fullName>Forkhead box protein P2</fullName>
    </recommendedName>
</protein>
<feature type="chain" id="PRO_0000091884" description="Forkhead box protein P2">
    <location>
        <begin position="1"/>
        <end position="716"/>
    </location>
</feature>
<feature type="zinc finger region" description="C2H2-type">
    <location>
        <begin position="347"/>
        <end position="372"/>
    </location>
</feature>
<feature type="DNA-binding region" description="Fork-head" evidence="4">
    <location>
        <begin position="505"/>
        <end position="595"/>
    </location>
</feature>
<feature type="region of interest" description="Disordered" evidence="5">
    <location>
        <begin position="1"/>
        <end position="45"/>
    </location>
</feature>
<feature type="region of interest" description="Disordered" evidence="5">
    <location>
        <begin position="286"/>
        <end position="340"/>
    </location>
</feature>
<feature type="region of interest" description="Leucine-zipper">
    <location>
        <begin position="389"/>
        <end position="410"/>
    </location>
</feature>
<feature type="region of interest" description="CTBP1-binding" evidence="1">
    <location>
        <begin position="423"/>
        <end position="427"/>
    </location>
</feature>
<feature type="region of interest" description="Disordered" evidence="5">
    <location>
        <begin position="439"/>
        <end position="466"/>
    </location>
</feature>
<feature type="region of interest" description="Disordered" evidence="5">
    <location>
        <begin position="650"/>
        <end position="669"/>
    </location>
</feature>
<feature type="region of interest" description="Disordered" evidence="5">
    <location>
        <begin position="679"/>
        <end position="716"/>
    </location>
</feature>
<feature type="compositionally biased region" description="Polar residues" evidence="5">
    <location>
        <begin position="1"/>
        <end position="28"/>
    </location>
</feature>
<feature type="compositionally biased region" description="Low complexity" evidence="5">
    <location>
        <begin position="293"/>
        <end position="306"/>
    </location>
</feature>
<feature type="compositionally biased region" description="Polar residues" evidence="5">
    <location>
        <begin position="316"/>
        <end position="325"/>
    </location>
</feature>
<feature type="compositionally biased region" description="Basic and acidic residues" evidence="5">
    <location>
        <begin position="327"/>
        <end position="338"/>
    </location>
</feature>
<feature type="compositionally biased region" description="Low complexity" evidence="5">
    <location>
        <begin position="439"/>
        <end position="460"/>
    </location>
</feature>
<feature type="compositionally biased region" description="Acidic residues" evidence="5">
    <location>
        <begin position="700"/>
        <end position="716"/>
    </location>
</feature>
<evidence type="ECO:0000250" key="1"/>
<evidence type="ECO:0000250" key="2">
    <source>
        <dbReference type="UniProtKB" id="O15409"/>
    </source>
</evidence>
<evidence type="ECO:0000250" key="3">
    <source>
        <dbReference type="UniProtKB" id="P58463"/>
    </source>
</evidence>
<evidence type="ECO:0000255" key="4">
    <source>
        <dbReference type="PROSITE-ProRule" id="PRU00089"/>
    </source>
</evidence>
<evidence type="ECO:0000256" key="5">
    <source>
        <dbReference type="SAM" id="MobiDB-lite"/>
    </source>
</evidence>
<evidence type="ECO:0000305" key="6"/>
<reference key="1">
    <citation type="journal article" date="2002" name="Nature">
        <title>Molecular evolution of FOXP2, a gene involved in speech and language.</title>
        <authorList>
            <person name="Enard W."/>
            <person name="Przeworski M."/>
            <person name="Fisher S.E."/>
            <person name="Lai C.S.L."/>
            <person name="Wiebe V."/>
            <person name="Kitano T."/>
            <person name="Monaco A.P."/>
            <person name="Paeaebo S."/>
        </authorList>
    </citation>
    <scope>NUCLEOTIDE SEQUENCE [GENOMIC DNA / MRNA]</scope>
</reference>
<reference key="2">
    <citation type="journal article" date="2002" name="Genetics">
        <title>Accelerated protein evolution and origins of human-specific features: Foxp2 as an example.</title>
        <authorList>
            <person name="Zhang J."/>
            <person name="Webb D.M."/>
            <person name="Podlaha O."/>
        </authorList>
    </citation>
    <scope>NUCLEOTIDE SEQUENCE [MRNA]</scope>
</reference>
<reference key="3">
    <citation type="submission" date="2001-11" db="EMBL/GenBank/DDBJ databases">
        <title>The FOXP2 gene, implicated in language development, is conserved in mammalian evolution.</title>
        <authorList>
            <person name="Walter N.A.R."/>
            <person name="Thompson J."/>
            <person name="McGoldrick D.J."/>
            <person name="Messier W."/>
        </authorList>
    </citation>
    <scope>NUCLEOTIDE SEQUENCE [GENOMIC DNA / MRNA]</scope>
    <source>
        <tissue>Blood</tissue>
    </source>
</reference>
<sequence>MMQESATETISNSSMNQNGMSTLSSQLDAGSRDGRSSGDTSSEVSTVELLHLQQQQALQAARQLLLQQQTSGLKSPKSSDKQRPLQVPVSVAMMTPQVITPQQMQQILQQQVLSPQQLQALLQQQQAVMLQQQQLQEFYKKQQEQLHLQLLQQQQQQQQQQQQQQQQQQQQQQQQQQQQQQQQQQQQQQQQQHPGKQAKEQQQQQQQQQQLAAQQLVFQQQLLQMQQLQQQQHLLSLQRQGLISIPPGQAALPVQSLPQAGLSPAEIQQLWKEVTGVHSMEDNGIKHGGLDLTTNNSSSTTSSTTSKASPPITHHSIVNGQSSVLNARRDSSSHEETGASHTLYGHGVCKWPGCESICEDFGQFLKHLNNEHALDDRSTAQCRVQMQVVQQLEIQLSKERERLQAMMTHLHMRPSEPKPSPKPLNLVSSVTMSKNMLETSPQSLPQTPTTPTAPVTPITQGPSVITPASVPNVGAIRRRHSDKYNIPMSSEIAPNYEFYKNADVRPPFTYATLIRQAIMESSDRQLTLNEIYSWFTRTFAYFRRNAATWKNAVRHNLSLHKCFVRVENVKGAVWTVDEVEYQKRRSQKITGSPTLVKNIPTSLGYGAALNASLQAALAESSLPLLSNPGLINNASSGLLQAVHEDLNGSLDHIDSNGNSSPGCSPQPHIHSIHVKEEPVIAEDEDCPMSLVTTANHSPELEDDREIEEEPLSEDLE</sequence>
<keyword id="KW-0238">DNA-binding</keyword>
<keyword id="KW-0479">Metal-binding</keyword>
<keyword id="KW-0539">Nucleus</keyword>
<keyword id="KW-1185">Reference proteome</keyword>
<keyword id="KW-0678">Repressor</keyword>
<keyword id="KW-0804">Transcription</keyword>
<keyword id="KW-0805">Transcription regulation</keyword>
<keyword id="KW-0862">Zinc</keyword>
<keyword id="KW-0863">Zinc-finger</keyword>
<organism>
    <name type="scientific">Pan troglodytes</name>
    <name type="common">Chimpanzee</name>
    <dbReference type="NCBI Taxonomy" id="9598"/>
    <lineage>
        <taxon>Eukaryota</taxon>
        <taxon>Metazoa</taxon>
        <taxon>Chordata</taxon>
        <taxon>Craniata</taxon>
        <taxon>Vertebrata</taxon>
        <taxon>Euteleostomi</taxon>
        <taxon>Mammalia</taxon>
        <taxon>Eutheria</taxon>
        <taxon>Euarchontoglires</taxon>
        <taxon>Primates</taxon>
        <taxon>Haplorrhini</taxon>
        <taxon>Catarrhini</taxon>
        <taxon>Hominidae</taxon>
        <taxon>Pan</taxon>
    </lineage>
</organism>
<dbReference type="EMBL" id="AF512947">
    <property type="protein sequence ID" value="AAN03385.1"/>
    <property type="molecule type" value="mRNA"/>
</dbReference>
<dbReference type="EMBL" id="AF515051">
    <property type="protein sequence ID" value="AAN03409.1"/>
    <property type="molecule type" value="Genomic_DNA"/>
</dbReference>
<dbReference type="EMBL" id="AF515052">
    <property type="protein sequence ID" value="AAN03410.1"/>
    <property type="molecule type" value="Genomic_DNA"/>
</dbReference>
<dbReference type="EMBL" id="AY143178">
    <property type="protein sequence ID" value="AAN60056.1"/>
    <property type="molecule type" value="mRNA"/>
</dbReference>
<dbReference type="EMBL" id="AY064549">
    <property type="protein sequence ID" value="AAL57735.1"/>
    <property type="molecule type" value="mRNA"/>
</dbReference>
<dbReference type="EMBL" id="AY064565">
    <property type="protein sequence ID" value="AAL57731.1"/>
    <property type="molecule type" value="Genomic_DNA"/>
</dbReference>
<dbReference type="EMBL" id="AY064551">
    <property type="protein sequence ID" value="AAL57731.1"/>
    <property type="status" value="JOINED"/>
    <property type="molecule type" value="Genomic_DNA"/>
</dbReference>
<dbReference type="EMBL" id="AY064552">
    <property type="protein sequence ID" value="AAL57731.1"/>
    <property type="status" value="JOINED"/>
    <property type="molecule type" value="Genomic_DNA"/>
</dbReference>
<dbReference type="EMBL" id="AY064553">
    <property type="protein sequence ID" value="AAL57731.1"/>
    <property type="status" value="JOINED"/>
    <property type="molecule type" value="Genomic_DNA"/>
</dbReference>
<dbReference type="EMBL" id="AY064554">
    <property type="protein sequence ID" value="AAL57731.1"/>
    <property type="status" value="JOINED"/>
    <property type="molecule type" value="Genomic_DNA"/>
</dbReference>
<dbReference type="EMBL" id="AY064555">
    <property type="protein sequence ID" value="AAL57731.1"/>
    <property type="status" value="JOINED"/>
    <property type="molecule type" value="Genomic_DNA"/>
</dbReference>
<dbReference type="EMBL" id="AY064556">
    <property type="protein sequence ID" value="AAL57731.1"/>
    <property type="status" value="JOINED"/>
    <property type="molecule type" value="Genomic_DNA"/>
</dbReference>
<dbReference type="EMBL" id="AY064557">
    <property type="protein sequence ID" value="AAL57731.1"/>
    <property type="status" value="JOINED"/>
    <property type="molecule type" value="Genomic_DNA"/>
</dbReference>
<dbReference type="EMBL" id="AY064558">
    <property type="protein sequence ID" value="AAL57731.1"/>
    <property type="status" value="JOINED"/>
    <property type="molecule type" value="Genomic_DNA"/>
</dbReference>
<dbReference type="EMBL" id="AY064559">
    <property type="protein sequence ID" value="AAL57731.1"/>
    <property type="status" value="JOINED"/>
    <property type="molecule type" value="Genomic_DNA"/>
</dbReference>
<dbReference type="EMBL" id="AY064560">
    <property type="protein sequence ID" value="AAL57731.1"/>
    <property type="status" value="JOINED"/>
    <property type="molecule type" value="Genomic_DNA"/>
</dbReference>
<dbReference type="EMBL" id="AY064561">
    <property type="protein sequence ID" value="AAL57731.1"/>
    <property type="status" value="JOINED"/>
    <property type="molecule type" value="Genomic_DNA"/>
</dbReference>
<dbReference type="EMBL" id="AY064562">
    <property type="protein sequence ID" value="AAL57731.1"/>
    <property type="status" value="JOINED"/>
    <property type="molecule type" value="Genomic_DNA"/>
</dbReference>
<dbReference type="EMBL" id="AY064563">
    <property type="protein sequence ID" value="AAL57731.1"/>
    <property type="status" value="JOINED"/>
    <property type="molecule type" value="Genomic_DNA"/>
</dbReference>
<dbReference type="EMBL" id="AY064564">
    <property type="protein sequence ID" value="AAL57731.1"/>
    <property type="status" value="JOINED"/>
    <property type="molecule type" value="Genomic_DNA"/>
</dbReference>
<dbReference type="RefSeq" id="NP_001009020.1">
    <property type="nucleotide sequence ID" value="NM_001009020.3"/>
</dbReference>
<dbReference type="RefSeq" id="XP_054543029.1">
    <property type="nucleotide sequence ID" value="XM_054687054.2"/>
</dbReference>
<dbReference type="SMR" id="Q8MJA0"/>
<dbReference type="FunCoup" id="Q8MJA0">
    <property type="interactions" value="1459"/>
</dbReference>
<dbReference type="STRING" id="9598.ENSPTRP00000071606"/>
<dbReference type="PaxDb" id="9598-ENSPTRP00000033573"/>
<dbReference type="GeneID" id="449627"/>
<dbReference type="CTD" id="93986"/>
<dbReference type="eggNOG" id="KOG4385">
    <property type="taxonomic scope" value="Eukaryota"/>
</dbReference>
<dbReference type="HOGENOM" id="CLU_019502_3_1_1"/>
<dbReference type="InParanoid" id="Q8MJA0"/>
<dbReference type="TreeFam" id="TF326978"/>
<dbReference type="Proteomes" id="UP000002277">
    <property type="component" value="Unplaced"/>
</dbReference>
<dbReference type="GO" id="GO:0005634">
    <property type="term" value="C:nucleus"/>
    <property type="evidence" value="ECO:0000318"/>
    <property type="project" value="GO_Central"/>
</dbReference>
<dbReference type="GO" id="GO:0003677">
    <property type="term" value="F:DNA binding"/>
    <property type="evidence" value="ECO:0000250"/>
    <property type="project" value="UniProtKB"/>
</dbReference>
<dbReference type="GO" id="GO:0001227">
    <property type="term" value="F:DNA-binding transcription repressor activity, RNA polymerase II-specific"/>
    <property type="evidence" value="ECO:0000318"/>
    <property type="project" value="GO_Central"/>
</dbReference>
<dbReference type="GO" id="GO:0042803">
    <property type="term" value="F:protein homodimerization activity"/>
    <property type="evidence" value="ECO:0000250"/>
    <property type="project" value="UniProtKB"/>
</dbReference>
<dbReference type="GO" id="GO:0000978">
    <property type="term" value="F:RNA polymerase II cis-regulatory region sequence-specific DNA binding"/>
    <property type="evidence" value="ECO:0000318"/>
    <property type="project" value="GO_Central"/>
</dbReference>
<dbReference type="GO" id="GO:0008270">
    <property type="term" value="F:zinc ion binding"/>
    <property type="evidence" value="ECO:0007669"/>
    <property type="project" value="UniProtKB-KW"/>
</dbReference>
<dbReference type="GO" id="GO:0021757">
    <property type="term" value="P:caudate nucleus development"/>
    <property type="evidence" value="ECO:0000250"/>
    <property type="project" value="UniProtKB"/>
</dbReference>
<dbReference type="GO" id="GO:0021758">
    <property type="term" value="P:putamen development"/>
    <property type="evidence" value="ECO:0000250"/>
    <property type="project" value="UniProtKB"/>
</dbReference>
<dbReference type="GO" id="GO:0006357">
    <property type="term" value="P:regulation of transcription by RNA polymerase II"/>
    <property type="evidence" value="ECO:0000318"/>
    <property type="project" value="GO_Central"/>
</dbReference>
<dbReference type="CDD" id="cd20065">
    <property type="entry name" value="FH_FOXP2"/>
    <property type="match status" value="1"/>
</dbReference>
<dbReference type="FunFam" id="1.20.5.340:FF:000005">
    <property type="entry name" value="Forkhead box P1, isoform CRA_f"/>
    <property type="match status" value="1"/>
</dbReference>
<dbReference type="FunFam" id="1.10.10.10:FF:000010">
    <property type="entry name" value="Forkhead box P2 isoform B"/>
    <property type="match status" value="1"/>
</dbReference>
<dbReference type="Gene3D" id="1.20.5.340">
    <property type="match status" value="1"/>
</dbReference>
<dbReference type="Gene3D" id="1.10.10.10">
    <property type="entry name" value="Winged helix-like DNA-binding domain superfamily/Winged helix DNA-binding domain"/>
    <property type="match status" value="1"/>
</dbReference>
<dbReference type="InterPro" id="IPR047412">
    <property type="entry name" value="FH_FOXP1_P2"/>
</dbReference>
<dbReference type="InterPro" id="IPR001766">
    <property type="entry name" value="Fork_head_dom"/>
</dbReference>
<dbReference type="InterPro" id="IPR050998">
    <property type="entry name" value="FOXP"/>
</dbReference>
<dbReference type="InterPro" id="IPR032354">
    <property type="entry name" value="FOXP-CC"/>
</dbReference>
<dbReference type="InterPro" id="IPR030456">
    <property type="entry name" value="TF_fork_head_CS_2"/>
</dbReference>
<dbReference type="InterPro" id="IPR036388">
    <property type="entry name" value="WH-like_DNA-bd_sf"/>
</dbReference>
<dbReference type="InterPro" id="IPR036390">
    <property type="entry name" value="WH_DNA-bd_sf"/>
</dbReference>
<dbReference type="PANTHER" id="PTHR45796">
    <property type="entry name" value="FORKHEAD BOX P, ISOFORM C"/>
    <property type="match status" value="1"/>
</dbReference>
<dbReference type="PANTHER" id="PTHR45796:SF9">
    <property type="entry name" value="FORKHEAD BOX PROTEIN P2"/>
    <property type="match status" value="1"/>
</dbReference>
<dbReference type="Pfam" id="PF00250">
    <property type="entry name" value="Forkhead"/>
    <property type="match status" value="1"/>
</dbReference>
<dbReference type="Pfam" id="PF16159">
    <property type="entry name" value="FOXP-CC"/>
    <property type="match status" value="1"/>
</dbReference>
<dbReference type="PRINTS" id="PR00053">
    <property type="entry name" value="FORKHEAD"/>
</dbReference>
<dbReference type="SMART" id="SM00339">
    <property type="entry name" value="FH"/>
    <property type="match status" value="1"/>
</dbReference>
<dbReference type="SUPFAM" id="SSF46785">
    <property type="entry name" value="Winged helix' DNA-binding domain"/>
    <property type="match status" value="1"/>
</dbReference>
<dbReference type="PROSITE" id="PS00658">
    <property type="entry name" value="FORK_HEAD_2"/>
    <property type="match status" value="1"/>
</dbReference>
<dbReference type="PROSITE" id="PS50039">
    <property type="entry name" value="FORK_HEAD_3"/>
    <property type="match status" value="1"/>
</dbReference>
<dbReference type="PROSITE" id="PS00028">
    <property type="entry name" value="ZINC_FINGER_C2H2_1"/>
    <property type="match status" value="1"/>
</dbReference>
<accession>Q8MJA0</accession>
<accession>Q8MHX3</accession>
<gene>
    <name type="primary">FOXP2</name>
</gene>
<comment type="function">
    <text evidence="1">Transcriptional repressor that may play a role in the specification and differentiation of lung epithelium. May also play a role in developing neural, gastrointestinal and cardiovascular tissues. Can act with CTBP1 to synergistically repress transcription but CTPBP1 is not essential. Plays a role in synapse formation by regulating SRPX2 levels (By similarity).</text>
</comment>
<comment type="subunit">
    <text evidence="2 3">Forms homodimers and heterodimers with FOXP1 and FOXP4. Dimerization is required for DNA-binding. Interacts with CTBP1 (By similarity). Interacts with FOXP1 (By similarity). Interacts with TBR1 (By similarity). Interacts with ZMYM2 (By similarity).</text>
</comment>
<comment type="subcellular location">
    <subcellularLocation>
        <location evidence="6">Nucleus</location>
    </subcellularLocation>
</comment>
<comment type="domain">
    <text evidence="1">The leucine-zipper is required for dimerization and transcriptional repression.</text>
</comment>